<dbReference type="EMBL" id="CP000857">
    <property type="protein sequence ID" value="ACN45276.1"/>
    <property type="molecule type" value="Genomic_DNA"/>
</dbReference>
<dbReference type="RefSeq" id="WP_000028952.1">
    <property type="nucleotide sequence ID" value="NC_012125.1"/>
</dbReference>
<dbReference type="SMR" id="C0PYK9"/>
<dbReference type="GeneID" id="66756972"/>
<dbReference type="KEGG" id="sei:SPC_1110"/>
<dbReference type="HOGENOM" id="CLU_069054_5_1_6"/>
<dbReference type="Proteomes" id="UP000001599">
    <property type="component" value="Chromosome"/>
</dbReference>
<dbReference type="GO" id="GO:0005829">
    <property type="term" value="C:cytosol"/>
    <property type="evidence" value="ECO:0007669"/>
    <property type="project" value="TreeGrafter"/>
</dbReference>
<dbReference type="GO" id="GO:0051537">
    <property type="term" value="F:2 iron, 2 sulfur cluster binding"/>
    <property type="evidence" value="ECO:0007669"/>
    <property type="project" value="UniProtKB-ARBA"/>
</dbReference>
<dbReference type="GO" id="GO:0005506">
    <property type="term" value="F:iron ion binding"/>
    <property type="evidence" value="ECO:0007669"/>
    <property type="project" value="UniProtKB-UniRule"/>
</dbReference>
<dbReference type="GO" id="GO:0016226">
    <property type="term" value="P:iron-sulfur cluster assembly"/>
    <property type="evidence" value="ECO:0007669"/>
    <property type="project" value="UniProtKB-UniRule"/>
</dbReference>
<dbReference type="FunFam" id="2.60.300.12:FF:000001">
    <property type="entry name" value="Iron-binding protein IscA"/>
    <property type="match status" value="1"/>
</dbReference>
<dbReference type="Gene3D" id="2.60.300.12">
    <property type="entry name" value="HesB-like domain"/>
    <property type="match status" value="1"/>
</dbReference>
<dbReference type="HAMAP" id="MF_01429">
    <property type="entry name" value="Fe_S_insert_IscA"/>
    <property type="match status" value="1"/>
</dbReference>
<dbReference type="InterPro" id="IPR050322">
    <property type="entry name" value="Fe-S_cluster_asmbl/transfer"/>
</dbReference>
<dbReference type="InterPro" id="IPR000361">
    <property type="entry name" value="FeS_biogenesis"/>
</dbReference>
<dbReference type="InterPro" id="IPR016092">
    <property type="entry name" value="FeS_cluster_insertion"/>
</dbReference>
<dbReference type="InterPro" id="IPR017870">
    <property type="entry name" value="FeS_cluster_insertion_CS"/>
</dbReference>
<dbReference type="InterPro" id="IPR035903">
    <property type="entry name" value="HesB-like_dom_sf"/>
</dbReference>
<dbReference type="InterPro" id="IPR011302">
    <property type="entry name" value="IscA_proteobacteria"/>
</dbReference>
<dbReference type="NCBIfam" id="TIGR00049">
    <property type="entry name" value="iron-sulfur cluster assembly accessory protein"/>
    <property type="match status" value="1"/>
</dbReference>
<dbReference type="NCBIfam" id="TIGR02011">
    <property type="entry name" value="IscA"/>
    <property type="match status" value="1"/>
</dbReference>
<dbReference type="NCBIfam" id="NF007049">
    <property type="entry name" value="PRK09502.1"/>
    <property type="match status" value="1"/>
</dbReference>
<dbReference type="PANTHER" id="PTHR10072:SF41">
    <property type="entry name" value="IRON-SULFUR CLUSTER ASSEMBLY 1 HOMOLOG, MITOCHONDRIAL"/>
    <property type="match status" value="1"/>
</dbReference>
<dbReference type="PANTHER" id="PTHR10072">
    <property type="entry name" value="IRON-SULFUR CLUSTER ASSEMBLY PROTEIN"/>
    <property type="match status" value="1"/>
</dbReference>
<dbReference type="Pfam" id="PF01521">
    <property type="entry name" value="Fe-S_biosyn"/>
    <property type="match status" value="1"/>
</dbReference>
<dbReference type="SUPFAM" id="SSF89360">
    <property type="entry name" value="HesB-like domain"/>
    <property type="match status" value="1"/>
</dbReference>
<dbReference type="PROSITE" id="PS01152">
    <property type="entry name" value="HESB"/>
    <property type="match status" value="1"/>
</dbReference>
<name>ISCA_SALPC</name>
<evidence type="ECO:0000255" key="1">
    <source>
        <dbReference type="HAMAP-Rule" id="MF_01429"/>
    </source>
</evidence>
<sequence length="107" mass="11504">MSITLSDSAAARVNTFLANRGKGFGLRLGVRTSGCSGMAYVLEFVDEPTAEDTVFEDKGVKVVVDGKSLQFLDGTQLDFVKEGLNEGFKFSNPNVKDECGCGESFHV</sequence>
<reference key="1">
    <citation type="journal article" date="2009" name="PLoS ONE">
        <title>Salmonella paratyphi C: genetic divergence from Salmonella choleraesuis and pathogenic convergence with Salmonella typhi.</title>
        <authorList>
            <person name="Liu W.-Q."/>
            <person name="Feng Y."/>
            <person name="Wang Y."/>
            <person name="Zou Q.-H."/>
            <person name="Chen F."/>
            <person name="Guo J.-T."/>
            <person name="Peng Y.-H."/>
            <person name="Jin Y."/>
            <person name="Li Y.-G."/>
            <person name="Hu S.-N."/>
            <person name="Johnston R.N."/>
            <person name="Liu G.-R."/>
            <person name="Liu S.-L."/>
        </authorList>
    </citation>
    <scope>NUCLEOTIDE SEQUENCE [LARGE SCALE GENOMIC DNA]</scope>
    <source>
        <strain>RKS4594</strain>
    </source>
</reference>
<gene>
    <name evidence="1" type="primary">iscA</name>
    <name type="ordered locus">SPC_1110</name>
</gene>
<protein>
    <recommendedName>
        <fullName evidence="1">Iron-binding protein IscA</fullName>
    </recommendedName>
    <alternativeName>
        <fullName evidence="1">Iron-sulfur cluster assembly protein</fullName>
    </alternativeName>
</protein>
<accession>C0PYK9</accession>
<organism>
    <name type="scientific">Salmonella paratyphi C (strain RKS4594)</name>
    <dbReference type="NCBI Taxonomy" id="476213"/>
    <lineage>
        <taxon>Bacteria</taxon>
        <taxon>Pseudomonadati</taxon>
        <taxon>Pseudomonadota</taxon>
        <taxon>Gammaproteobacteria</taxon>
        <taxon>Enterobacterales</taxon>
        <taxon>Enterobacteriaceae</taxon>
        <taxon>Salmonella</taxon>
    </lineage>
</organism>
<proteinExistence type="inferred from homology"/>
<keyword id="KW-0408">Iron</keyword>
<keyword id="KW-0479">Metal-binding</keyword>
<comment type="function">
    <text evidence="1">Is able to transfer iron-sulfur clusters to apo-ferredoxin. Multiple cycles of [2Fe2S] cluster formation and transfer are observed, suggesting that IscA acts catalytically. Recruits intracellular free iron so as to provide iron for the assembly of transient iron-sulfur cluster in IscU in the presence of IscS, L-cysteine and the thioredoxin reductase system TrxA/TrxB.</text>
</comment>
<comment type="cofactor">
    <cofactor evidence="1">
        <name>Fe cation</name>
        <dbReference type="ChEBI" id="CHEBI:24875"/>
    </cofactor>
    <text evidence="1">Binds 2 iron ions per dimer. The dimer may bind additional iron ions.</text>
</comment>
<comment type="subunit">
    <text evidence="1">Homodimer; may form tetramers and higher multimers.</text>
</comment>
<comment type="similarity">
    <text evidence="1">Belongs to the HesB/IscA family.</text>
</comment>
<feature type="chain" id="PRO_1000184887" description="Iron-binding protein IscA">
    <location>
        <begin position="1"/>
        <end position="107"/>
    </location>
</feature>
<feature type="binding site" evidence="1">
    <location>
        <position position="35"/>
    </location>
    <ligand>
        <name>Fe cation</name>
        <dbReference type="ChEBI" id="CHEBI:24875"/>
    </ligand>
</feature>
<feature type="binding site" evidence="1">
    <location>
        <position position="99"/>
    </location>
    <ligand>
        <name>Fe cation</name>
        <dbReference type="ChEBI" id="CHEBI:24875"/>
    </ligand>
</feature>
<feature type="binding site" evidence="1">
    <location>
        <position position="101"/>
    </location>
    <ligand>
        <name>Fe cation</name>
        <dbReference type="ChEBI" id="CHEBI:24875"/>
    </ligand>
</feature>